<comment type="function">
    <text evidence="1">Plays a role in DNA damage repair as component of the ASCC complex. Part of the ASC-1 complex that enhances NF-kappa-B, SRF and AP1 transactivation. In cells responding to gastrin-activated paracrine signals, it is involved in the induction of SERPINB2 expression by gastrin. May also play a role in the development of neuromuscular junction.</text>
</comment>
<comment type="subunit">
    <text evidence="1">Identified in the ASCC complex that contains ASCC1, ASCC2 and ASCC3. Interacts directly with ASCC3. The ASCC complex interacts with ALKBH3. Part of the ASC-1 complex, that contains TRIP4, ASCC1, ASCC2 and ASCC3. Interacts with CSRP1. Interacts with ZCCHC4 (By similarity).</text>
</comment>
<comment type="subcellular location">
    <subcellularLocation>
        <location evidence="1">Nucleus</location>
    </subcellularLocation>
    <subcellularLocation>
        <location evidence="1">Nucleus speckle</location>
    </subcellularLocation>
    <text evidence="1">Colocalizes with PRPF8 in nuclear speckles in the absence of DNA damage.</text>
</comment>
<comment type="tissue specificity">
    <text evidence="3">Expressed in the spinal cord, brain, paraspinal ganglia, thyroid, and submandibular glands.</text>
</comment>
<comment type="developmental stage">
    <text evidence="3">Expressed in 17.5-day-old embryos.</text>
</comment>
<organism>
    <name type="scientific">Mus musculus</name>
    <name type="common">Mouse</name>
    <dbReference type="NCBI Taxonomy" id="10090"/>
    <lineage>
        <taxon>Eukaryota</taxon>
        <taxon>Metazoa</taxon>
        <taxon>Chordata</taxon>
        <taxon>Craniata</taxon>
        <taxon>Vertebrata</taxon>
        <taxon>Euteleostomi</taxon>
        <taxon>Mammalia</taxon>
        <taxon>Eutheria</taxon>
        <taxon>Euarchontoglires</taxon>
        <taxon>Glires</taxon>
        <taxon>Rodentia</taxon>
        <taxon>Myomorpha</taxon>
        <taxon>Muroidea</taxon>
        <taxon>Muridae</taxon>
        <taxon>Murinae</taxon>
        <taxon>Mus</taxon>
        <taxon>Mus</taxon>
    </lineage>
</organism>
<feature type="chain" id="PRO_0000050101" description="Activating signal cointegrator 1 complex subunit 1">
    <location>
        <begin position="1"/>
        <end position="356"/>
    </location>
</feature>
<feature type="domain" description="KH" evidence="2">
    <location>
        <begin position="57"/>
        <end position="119"/>
    </location>
</feature>
<feature type="region of interest" description="Required for interaction with ASCC3" evidence="1">
    <location>
        <begin position="1"/>
        <end position="52"/>
    </location>
</feature>
<evidence type="ECO:0000250" key="1">
    <source>
        <dbReference type="UniProtKB" id="Q8N9N2"/>
    </source>
</evidence>
<evidence type="ECO:0000255" key="2">
    <source>
        <dbReference type="PROSITE-ProRule" id="PRU00117"/>
    </source>
</evidence>
<evidence type="ECO:0000269" key="3">
    <source>
    </source>
</evidence>
<reference key="1">
    <citation type="journal article" date="2005" name="Science">
        <title>The transcriptional landscape of the mammalian genome.</title>
        <authorList>
            <person name="Carninci P."/>
            <person name="Kasukawa T."/>
            <person name="Katayama S."/>
            <person name="Gough J."/>
            <person name="Frith M.C."/>
            <person name="Maeda N."/>
            <person name="Oyama R."/>
            <person name="Ravasi T."/>
            <person name="Lenhard B."/>
            <person name="Wells C."/>
            <person name="Kodzius R."/>
            <person name="Shimokawa K."/>
            <person name="Bajic V.B."/>
            <person name="Brenner S.E."/>
            <person name="Batalov S."/>
            <person name="Forrest A.R."/>
            <person name="Zavolan M."/>
            <person name="Davis M.J."/>
            <person name="Wilming L.G."/>
            <person name="Aidinis V."/>
            <person name="Allen J.E."/>
            <person name="Ambesi-Impiombato A."/>
            <person name="Apweiler R."/>
            <person name="Aturaliya R.N."/>
            <person name="Bailey T.L."/>
            <person name="Bansal M."/>
            <person name="Baxter L."/>
            <person name="Beisel K.W."/>
            <person name="Bersano T."/>
            <person name="Bono H."/>
            <person name="Chalk A.M."/>
            <person name="Chiu K.P."/>
            <person name="Choudhary V."/>
            <person name="Christoffels A."/>
            <person name="Clutterbuck D.R."/>
            <person name="Crowe M.L."/>
            <person name="Dalla E."/>
            <person name="Dalrymple B.P."/>
            <person name="de Bono B."/>
            <person name="Della Gatta G."/>
            <person name="di Bernardo D."/>
            <person name="Down T."/>
            <person name="Engstrom P."/>
            <person name="Fagiolini M."/>
            <person name="Faulkner G."/>
            <person name="Fletcher C.F."/>
            <person name="Fukushima T."/>
            <person name="Furuno M."/>
            <person name="Futaki S."/>
            <person name="Gariboldi M."/>
            <person name="Georgii-Hemming P."/>
            <person name="Gingeras T.R."/>
            <person name="Gojobori T."/>
            <person name="Green R.E."/>
            <person name="Gustincich S."/>
            <person name="Harbers M."/>
            <person name="Hayashi Y."/>
            <person name="Hensch T.K."/>
            <person name="Hirokawa N."/>
            <person name="Hill D."/>
            <person name="Huminiecki L."/>
            <person name="Iacono M."/>
            <person name="Ikeo K."/>
            <person name="Iwama A."/>
            <person name="Ishikawa T."/>
            <person name="Jakt M."/>
            <person name="Kanapin A."/>
            <person name="Katoh M."/>
            <person name="Kawasawa Y."/>
            <person name="Kelso J."/>
            <person name="Kitamura H."/>
            <person name="Kitano H."/>
            <person name="Kollias G."/>
            <person name="Krishnan S.P."/>
            <person name="Kruger A."/>
            <person name="Kummerfeld S.K."/>
            <person name="Kurochkin I.V."/>
            <person name="Lareau L.F."/>
            <person name="Lazarevic D."/>
            <person name="Lipovich L."/>
            <person name="Liu J."/>
            <person name="Liuni S."/>
            <person name="McWilliam S."/>
            <person name="Madan Babu M."/>
            <person name="Madera M."/>
            <person name="Marchionni L."/>
            <person name="Matsuda H."/>
            <person name="Matsuzawa S."/>
            <person name="Miki H."/>
            <person name="Mignone F."/>
            <person name="Miyake S."/>
            <person name="Morris K."/>
            <person name="Mottagui-Tabar S."/>
            <person name="Mulder N."/>
            <person name="Nakano N."/>
            <person name="Nakauchi H."/>
            <person name="Ng P."/>
            <person name="Nilsson R."/>
            <person name="Nishiguchi S."/>
            <person name="Nishikawa S."/>
            <person name="Nori F."/>
            <person name="Ohara O."/>
            <person name="Okazaki Y."/>
            <person name="Orlando V."/>
            <person name="Pang K.C."/>
            <person name="Pavan W.J."/>
            <person name="Pavesi G."/>
            <person name="Pesole G."/>
            <person name="Petrovsky N."/>
            <person name="Piazza S."/>
            <person name="Reed J."/>
            <person name="Reid J.F."/>
            <person name="Ring B.Z."/>
            <person name="Ringwald M."/>
            <person name="Rost B."/>
            <person name="Ruan Y."/>
            <person name="Salzberg S.L."/>
            <person name="Sandelin A."/>
            <person name="Schneider C."/>
            <person name="Schoenbach C."/>
            <person name="Sekiguchi K."/>
            <person name="Semple C.A."/>
            <person name="Seno S."/>
            <person name="Sessa L."/>
            <person name="Sheng Y."/>
            <person name="Shibata Y."/>
            <person name="Shimada H."/>
            <person name="Shimada K."/>
            <person name="Silva D."/>
            <person name="Sinclair B."/>
            <person name="Sperling S."/>
            <person name="Stupka E."/>
            <person name="Sugiura K."/>
            <person name="Sultana R."/>
            <person name="Takenaka Y."/>
            <person name="Taki K."/>
            <person name="Tammoja K."/>
            <person name="Tan S.L."/>
            <person name="Tang S."/>
            <person name="Taylor M.S."/>
            <person name="Tegner J."/>
            <person name="Teichmann S.A."/>
            <person name="Ueda H.R."/>
            <person name="van Nimwegen E."/>
            <person name="Verardo R."/>
            <person name="Wei C.L."/>
            <person name="Yagi K."/>
            <person name="Yamanishi H."/>
            <person name="Zabarovsky E."/>
            <person name="Zhu S."/>
            <person name="Zimmer A."/>
            <person name="Hide W."/>
            <person name="Bult C."/>
            <person name="Grimmond S.M."/>
            <person name="Teasdale R.D."/>
            <person name="Liu E.T."/>
            <person name="Brusic V."/>
            <person name="Quackenbush J."/>
            <person name="Wahlestedt C."/>
            <person name="Mattick J.S."/>
            <person name="Hume D.A."/>
            <person name="Kai C."/>
            <person name="Sasaki D."/>
            <person name="Tomaru Y."/>
            <person name="Fukuda S."/>
            <person name="Kanamori-Katayama M."/>
            <person name="Suzuki M."/>
            <person name="Aoki J."/>
            <person name="Arakawa T."/>
            <person name="Iida J."/>
            <person name="Imamura K."/>
            <person name="Itoh M."/>
            <person name="Kato T."/>
            <person name="Kawaji H."/>
            <person name="Kawagashira N."/>
            <person name="Kawashima T."/>
            <person name="Kojima M."/>
            <person name="Kondo S."/>
            <person name="Konno H."/>
            <person name="Nakano K."/>
            <person name="Ninomiya N."/>
            <person name="Nishio T."/>
            <person name="Okada M."/>
            <person name="Plessy C."/>
            <person name="Shibata K."/>
            <person name="Shiraki T."/>
            <person name="Suzuki S."/>
            <person name="Tagami M."/>
            <person name="Waki K."/>
            <person name="Watahiki A."/>
            <person name="Okamura-Oho Y."/>
            <person name="Suzuki H."/>
            <person name="Kawai J."/>
            <person name="Hayashizaki Y."/>
        </authorList>
    </citation>
    <scope>NUCLEOTIDE SEQUENCE [LARGE SCALE MRNA]</scope>
    <source>
        <strain>C57BL/6J</strain>
        <strain>NOD</strain>
        <tissue>Egg</tissue>
        <tissue>Pancreas</tissue>
        <tissue>Spleen</tissue>
    </source>
</reference>
<reference key="2">
    <citation type="journal article" date="2004" name="Genome Res.">
        <title>The status, quality, and expansion of the NIH full-length cDNA project: the Mammalian Gene Collection (MGC).</title>
        <authorList>
            <consortium name="The MGC Project Team"/>
        </authorList>
    </citation>
    <scope>NUCLEOTIDE SEQUENCE [LARGE SCALE MRNA]</scope>
    <source>
        <tissue>Retina</tissue>
    </source>
</reference>
<reference key="3">
    <citation type="journal article" date="2010" name="Cell">
        <title>A tissue-specific atlas of mouse protein phosphorylation and expression.</title>
        <authorList>
            <person name="Huttlin E.L."/>
            <person name="Jedrychowski M.P."/>
            <person name="Elias J.E."/>
            <person name="Goswami T."/>
            <person name="Rad R."/>
            <person name="Beausoleil S.A."/>
            <person name="Villen J."/>
            <person name="Haas W."/>
            <person name="Sowa M.E."/>
            <person name="Gygi S.P."/>
        </authorList>
    </citation>
    <scope>IDENTIFICATION BY MASS SPECTROMETRY [LARGE SCALE ANALYSIS]</scope>
    <source>
        <tissue>Spleen</tissue>
    </source>
</reference>
<reference key="4">
    <citation type="journal article" date="2016" name="Am. J. Hum. Genet.">
        <title>Mutations in subunits of the activating signal cointegrator 1 complex are associated with prenatal spinal muscular atrophy and congenital bone fractures.</title>
        <authorList>
            <person name="Knierim E."/>
            <person name="Hirata H."/>
            <person name="Wolf N.I."/>
            <person name="Morales-Gonzalez S."/>
            <person name="Schottmann G."/>
            <person name="Tanaka Y."/>
            <person name="Rudnik-Schoeneborn S."/>
            <person name="Orgeur M."/>
            <person name="Zerres K."/>
            <person name="Vogt S."/>
            <person name="van Riesen A."/>
            <person name="Gill E."/>
            <person name="Seifert F."/>
            <person name="Zwirner A."/>
            <person name="Kirschner J."/>
            <person name="Goebel H.H."/>
            <person name="Huebner C."/>
            <person name="Stricker S."/>
            <person name="Meierhofer D."/>
            <person name="Stenzel W."/>
            <person name="Schuelke M."/>
        </authorList>
    </citation>
    <scope>TISSUE SPECIFICITY</scope>
    <scope>DEVELOPMENTAL STAGE</scope>
</reference>
<accession>Q9D8Z1</accession>
<accession>Q3TAC2</accession>
<keyword id="KW-0227">DNA damage</keyword>
<keyword id="KW-0234">DNA repair</keyword>
<keyword id="KW-0539">Nucleus</keyword>
<keyword id="KW-1185">Reference proteome</keyword>
<keyword id="KW-0804">Transcription</keyword>
<keyword id="KW-0805">Transcription regulation</keyword>
<protein>
    <recommendedName>
        <fullName>Activating signal cointegrator 1 complex subunit 1</fullName>
    </recommendedName>
    <alternativeName>
        <fullName>ASC-1 complex subunit p50</fullName>
    </alternativeName>
    <alternativeName>
        <fullName>Trip4 complex subunit p50</fullName>
    </alternativeName>
</protein>
<gene>
    <name type="primary">Ascc1</name>
</gene>
<sequence length="356" mass="41280">MDVLRPQIVTFDGRNYRKNPIQEKQYQHEEDEDFYPDSMEYSDEPCGAYEVAQTPHGFRATVSAPSLLYKHIVGKRGDTKKKIEVETKTSINIPKHGHEGEIVITGQHRNGVVSARTRIDVLLDTFRRRQPFTHFLSFFLNEVEVQERFLMFQEEVLRKCSKDRGVDSTIFQNPKKLHLTIGMLVLLSEQEIQQTCEILQRCKEEFINDISGGRPLEVEMAGIEYMNDDPAMVDVLYAKVHMKDGSNRLQELVDRVLERFQSLGLIVKEWTSVKLHATVMNTLLRKDPNAEGRYNLYTADGKYIFKERESFDGRNILKTFENFYFGSLRLNSIHISQRFTVDSFGNYASCGHVDFS</sequence>
<proteinExistence type="evidence at protein level"/>
<name>ASCC1_MOUSE</name>
<dbReference type="EMBL" id="AK007519">
    <property type="protein sequence ID" value="BAB25087.1"/>
    <property type="molecule type" value="mRNA"/>
</dbReference>
<dbReference type="EMBL" id="AK139944">
    <property type="protein sequence ID" value="BAE24191.1"/>
    <property type="molecule type" value="mRNA"/>
</dbReference>
<dbReference type="EMBL" id="AK171958">
    <property type="protein sequence ID" value="BAE42747.1"/>
    <property type="molecule type" value="mRNA"/>
</dbReference>
<dbReference type="EMBL" id="BC030905">
    <property type="protein sequence ID" value="AAH30905.1"/>
    <property type="molecule type" value="mRNA"/>
</dbReference>
<dbReference type="CCDS" id="CCDS23870.1"/>
<dbReference type="RefSeq" id="NP_001186116.1">
    <property type="nucleotide sequence ID" value="NM_001199187.2"/>
</dbReference>
<dbReference type="RefSeq" id="NP_081213.1">
    <property type="nucleotide sequence ID" value="NM_026937.3"/>
</dbReference>
<dbReference type="RefSeq" id="XP_006514103.1">
    <property type="nucleotide sequence ID" value="XM_006514040.4"/>
</dbReference>
<dbReference type="RefSeq" id="XP_030101110.1">
    <property type="nucleotide sequence ID" value="XM_030245250.1"/>
</dbReference>
<dbReference type="RefSeq" id="XP_036011872.1">
    <property type="nucleotide sequence ID" value="XM_036155979.1"/>
</dbReference>
<dbReference type="SMR" id="Q9D8Z1"/>
<dbReference type="BioGRID" id="213222">
    <property type="interactions" value="4"/>
</dbReference>
<dbReference type="FunCoup" id="Q9D8Z1">
    <property type="interactions" value="1252"/>
</dbReference>
<dbReference type="STRING" id="10090.ENSMUSP00000126301"/>
<dbReference type="iPTMnet" id="Q9D8Z1"/>
<dbReference type="PhosphoSitePlus" id="Q9D8Z1"/>
<dbReference type="PaxDb" id="10090-ENSMUSP00000052351"/>
<dbReference type="PeptideAtlas" id="Q9D8Z1"/>
<dbReference type="ProteomicsDB" id="265116"/>
<dbReference type="Pumba" id="Q9D8Z1"/>
<dbReference type="Antibodypedia" id="29224">
    <property type="antibodies" value="202 antibodies from 23 providers"/>
</dbReference>
<dbReference type="Ensembl" id="ENSMUST00000050516.14">
    <property type="protein sequence ID" value="ENSMUSP00000052351.7"/>
    <property type="gene ID" value="ENSMUSG00000044475.15"/>
</dbReference>
<dbReference type="Ensembl" id="ENSMUST00000164083.4">
    <property type="protein sequence ID" value="ENSMUSP00000126301.3"/>
    <property type="gene ID" value="ENSMUSG00000044475.15"/>
</dbReference>
<dbReference type="GeneID" id="69090"/>
<dbReference type="KEGG" id="mmu:69090"/>
<dbReference type="UCSC" id="uc007feh.2">
    <property type="organism name" value="mouse"/>
</dbReference>
<dbReference type="AGR" id="MGI:1916340"/>
<dbReference type="CTD" id="51008"/>
<dbReference type="MGI" id="MGI:1916340">
    <property type="gene designation" value="Ascc1"/>
</dbReference>
<dbReference type="VEuPathDB" id="HostDB:ENSMUSG00000044475"/>
<dbReference type="eggNOG" id="KOG2814">
    <property type="taxonomic scope" value="Eukaryota"/>
</dbReference>
<dbReference type="GeneTree" id="ENSGT00390000018119"/>
<dbReference type="HOGENOM" id="CLU_044606_0_0_1"/>
<dbReference type="InParanoid" id="Q9D8Z1"/>
<dbReference type="OMA" id="CLAHFQT"/>
<dbReference type="OrthoDB" id="277832at2759"/>
<dbReference type="PhylomeDB" id="Q9D8Z1"/>
<dbReference type="TreeFam" id="TF314479"/>
<dbReference type="BioGRID-ORCS" id="69090">
    <property type="hits" value="5 hits in 80 CRISPR screens"/>
</dbReference>
<dbReference type="ChiTaRS" id="Ascc1">
    <property type="organism name" value="mouse"/>
</dbReference>
<dbReference type="PRO" id="PR:Q9D8Z1"/>
<dbReference type="Proteomes" id="UP000000589">
    <property type="component" value="Chromosome 10"/>
</dbReference>
<dbReference type="RNAct" id="Q9D8Z1">
    <property type="molecule type" value="protein"/>
</dbReference>
<dbReference type="Bgee" id="ENSMUSG00000044475">
    <property type="expression patterns" value="Expressed in right kidney and 258 other cell types or tissues"/>
</dbReference>
<dbReference type="GO" id="GO:1990391">
    <property type="term" value="C:DNA repair complex"/>
    <property type="evidence" value="ECO:0007669"/>
    <property type="project" value="Ensembl"/>
</dbReference>
<dbReference type="GO" id="GO:0016607">
    <property type="term" value="C:nuclear speck"/>
    <property type="evidence" value="ECO:0007669"/>
    <property type="project" value="UniProtKB-SubCell"/>
</dbReference>
<dbReference type="GO" id="GO:0005634">
    <property type="term" value="C:nucleus"/>
    <property type="evidence" value="ECO:0000250"/>
    <property type="project" value="UniProtKB"/>
</dbReference>
<dbReference type="GO" id="GO:0005667">
    <property type="term" value="C:transcription regulator complex"/>
    <property type="evidence" value="ECO:0000266"/>
    <property type="project" value="MGI"/>
</dbReference>
<dbReference type="GO" id="GO:0003723">
    <property type="term" value="F:RNA binding"/>
    <property type="evidence" value="ECO:0007669"/>
    <property type="project" value="InterPro"/>
</dbReference>
<dbReference type="GO" id="GO:0006307">
    <property type="term" value="P:DNA alkylation repair"/>
    <property type="evidence" value="ECO:0007669"/>
    <property type="project" value="InterPro"/>
</dbReference>
<dbReference type="GO" id="GO:0006355">
    <property type="term" value="P:regulation of DNA-templated transcription"/>
    <property type="evidence" value="ECO:0000266"/>
    <property type="project" value="MGI"/>
</dbReference>
<dbReference type="CDD" id="cd22419">
    <property type="entry name" value="KH-I_ASCC1"/>
    <property type="match status" value="1"/>
</dbReference>
<dbReference type="FunFam" id="3.30.1370.10:FF:000101">
    <property type="entry name" value="Activating signal cointegrator 1 complex subunit 1"/>
    <property type="match status" value="1"/>
</dbReference>
<dbReference type="FunFam" id="3.90.1140.10:FF:000005">
    <property type="entry name" value="activating signal cointegrator 1 complex subunit 1"/>
    <property type="match status" value="1"/>
</dbReference>
<dbReference type="Gene3D" id="3.90.1140.10">
    <property type="entry name" value="Cyclic phosphodiesterase"/>
    <property type="match status" value="1"/>
</dbReference>
<dbReference type="Gene3D" id="3.30.1370.10">
    <property type="entry name" value="K Homology domain, type 1"/>
    <property type="match status" value="1"/>
</dbReference>
<dbReference type="InterPro" id="IPR019510">
    <property type="entry name" value="AKAP7-like_phosphoesterase"/>
</dbReference>
<dbReference type="InterPro" id="IPR009210">
    <property type="entry name" value="ASCC1"/>
</dbReference>
<dbReference type="InterPro" id="IPR047538">
    <property type="entry name" value="KH-I_ASCC1"/>
</dbReference>
<dbReference type="InterPro" id="IPR004087">
    <property type="entry name" value="KH_dom"/>
</dbReference>
<dbReference type="InterPro" id="IPR004088">
    <property type="entry name" value="KH_dom_type_1"/>
</dbReference>
<dbReference type="InterPro" id="IPR036612">
    <property type="entry name" value="KH_dom_type_1_sf"/>
</dbReference>
<dbReference type="PANTHER" id="PTHR13360">
    <property type="entry name" value="ACTIVATING SIGNAL COINTEGRATOR 1 COMPLEX SUBUNIT 1"/>
    <property type="match status" value="1"/>
</dbReference>
<dbReference type="PANTHER" id="PTHR13360:SF1">
    <property type="entry name" value="ACTIVATING SIGNAL COINTEGRATOR 1 COMPLEX SUBUNIT 1"/>
    <property type="match status" value="1"/>
</dbReference>
<dbReference type="Pfam" id="PF10469">
    <property type="entry name" value="AKAP7_NLS"/>
    <property type="match status" value="1"/>
</dbReference>
<dbReference type="Pfam" id="PF00013">
    <property type="entry name" value="KH_1"/>
    <property type="match status" value="1"/>
</dbReference>
<dbReference type="PIRSF" id="PIRSF027019">
    <property type="entry name" value="Euk_LigT"/>
    <property type="match status" value="1"/>
</dbReference>
<dbReference type="SMART" id="SM00322">
    <property type="entry name" value="KH"/>
    <property type="match status" value="1"/>
</dbReference>
<dbReference type="SUPFAM" id="SSF54791">
    <property type="entry name" value="Eukaryotic type KH-domain (KH-domain type I)"/>
    <property type="match status" value="1"/>
</dbReference>
<dbReference type="PROSITE" id="PS50084">
    <property type="entry name" value="KH_TYPE_1"/>
    <property type="match status" value="1"/>
</dbReference>